<name>COA6_MOUSE</name>
<reference key="1">
    <citation type="journal article" date="2005" name="Science">
        <title>The transcriptional landscape of the mammalian genome.</title>
        <authorList>
            <person name="Carninci P."/>
            <person name="Kasukawa T."/>
            <person name="Katayama S."/>
            <person name="Gough J."/>
            <person name="Frith M.C."/>
            <person name="Maeda N."/>
            <person name="Oyama R."/>
            <person name="Ravasi T."/>
            <person name="Lenhard B."/>
            <person name="Wells C."/>
            <person name="Kodzius R."/>
            <person name="Shimokawa K."/>
            <person name="Bajic V.B."/>
            <person name="Brenner S.E."/>
            <person name="Batalov S."/>
            <person name="Forrest A.R."/>
            <person name="Zavolan M."/>
            <person name="Davis M.J."/>
            <person name="Wilming L.G."/>
            <person name="Aidinis V."/>
            <person name="Allen J.E."/>
            <person name="Ambesi-Impiombato A."/>
            <person name="Apweiler R."/>
            <person name="Aturaliya R.N."/>
            <person name="Bailey T.L."/>
            <person name="Bansal M."/>
            <person name="Baxter L."/>
            <person name="Beisel K.W."/>
            <person name="Bersano T."/>
            <person name="Bono H."/>
            <person name="Chalk A.M."/>
            <person name="Chiu K.P."/>
            <person name="Choudhary V."/>
            <person name="Christoffels A."/>
            <person name="Clutterbuck D.R."/>
            <person name="Crowe M.L."/>
            <person name="Dalla E."/>
            <person name="Dalrymple B.P."/>
            <person name="de Bono B."/>
            <person name="Della Gatta G."/>
            <person name="di Bernardo D."/>
            <person name="Down T."/>
            <person name="Engstrom P."/>
            <person name="Fagiolini M."/>
            <person name="Faulkner G."/>
            <person name="Fletcher C.F."/>
            <person name="Fukushima T."/>
            <person name="Furuno M."/>
            <person name="Futaki S."/>
            <person name="Gariboldi M."/>
            <person name="Georgii-Hemming P."/>
            <person name="Gingeras T.R."/>
            <person name="Gojobori T."/>
            <person name="Green R.E."/>
            <person name="Gustincich S."/>
            <person name="Harbers M."/>
            <person name="Hayashi Y."/>
            <person name="Hensch T.K."/>
            <person name="Hirokawa N."/>
            <person name="Hill D."/>
            <person name="Huminiecki L."/>
            <person name="Iacono M."/>
            <person name="Ikeo K."/>
            <person name="Iwama A."/>
            <person name="Ishikawa T."/>
            <person name="Jakt M."/>
            <person name="Kanapin A."/>
            <person name="Katoh M."/>
            <person name="Kawasawa Y."/>
            <person name="Kelso J."/>
            <person name="Kitamura H."/>
            <person name="Kitano H."/>
            <person name="Kollias G."/>
            <person name="Krishnan S.P."/>
            <person name="Kruger A."/>
            <person name="Kummerfeld S.K."/>
            <person name="Kurochkin I.V."/>
            <person name="Lareau L.F."/>
            <person name="Lazarevic D."/>
            <person name="Lipovich L."/>
            <person name="Liu J."/>
            <person name="Liuni S."/>
            <person name="McWilliam S."/>
            <person name="Madan Babu M."/>
            <person name="Madera M."/>
            <person name="Marchionni L."/>
            <person name="Matsuda H."/>
            <person name="Matsuzawa S."/>
            <person name="Miki H."/>
            <person name="Mignone F."/>
            <person name="Miyake S."/>
            <person name="Morris K."/>
            <person name="Mottagui-Tabar S."/>
            <person name="Mulder N."/>
            <person name="Nakano N."/>
            <person name="Nakauchi H."/>
            <person name="Ng P."/>
            <person name="Nilsson R."/>
            <person name="Nishiguchi S."/>
            <person name="Nishikawa S."/>
            <person name="Nori F."/>
            <person name="Ohara O."/>
            <person name="Okazaki Y."/>
            <person name="Orlando V."/>
            <person name="Pang K.C."/>
            <person name="Pavan W.J."/>
            <person name="Pavesi G."/>
            <person name="Pesole G."/>
            <person name="Petrovsky N."/>
            <person name="Piazza S."/>
            <person name="Reed J."/>
            <person name="Reid J.F."/>
            <person name="Ring B.Z."/>
            <person name="Ringwald M."/>
            <person name="Rost B."/>
            <person name="Ruan Y."/>
            <person name="Salzberg S.L."/>
            <person name="Sandelin A."/>
            <person name="Schneider C."/>
            <person name="Schoenbach C."/>
            <person name="Sekiguchi K."/>
            <person name="Semple C.A."/>
            <person name="Seno S."/>
            <person name="Sessa L."/>
            <person name="Sheng Y."/>
            <person name="Shibata Y."/>
            <person name="Shimada H."/>
            <person name="Shimada K."/>
            <person name="Silva D."/>
            <person name="Sinclair B."/>
            <person name="Sperling S."/>
            <person name="Stupka E."/>
            <person name="Sugiura K."/>
            <person name="Sultana R."/>
            <person name="Takenaka Y."/>
            <person name="Taki K."/>
            <person name="Tammoja K."/>
            <person name="Tan S.L."/>
            <person name="Tang S."/>
            <person name="Taylor M.S."/>
            <person name="Tegner J."/>
            <person name="Teichmann S.A."/>
            <person name="Ueda H.R."/>
            <person name="van Nimwegen E."/>
            <person name="Verardo R."/>
            <person name="Wei C.L."/>
            <person name="Yagi K."/>
            <person name="Yamanishi H."/>
            <person name="Zabarovsky E."/>
            <person name="Zhu S."/>
            <person name="Zimmer A."/>
            <person name="Hide W."/>
            <person name="Bult C."/>
            <person name="Grimmond S.M."/>
            <person name="Teasdale R.D."/>
            <person name="Liu E.T."/>
            <person name="Brusic V."/>
            <person name="Quackenbush J."/>
            <person name="Wahlestedt C."/>
            <person name="Mattick J.S."/>
            <person name="Hume D.A."/>
            <person name="Kai C."/>
            <person name="Sasaki D."/>
            <person name="Tomaru Y."/>
            <person name="Fukuda S."/>
            <person name="Kanamori-Katayama M."/>
            <person name="Suzuki M."/>
            <person name="Aoki J."/>
            <person name="Arakawa T."/>
            <person name="Iida J."/>
            <person name="Imamura K."/>
            <person name="Itoh M."/>
            <person name="Kato T."/>
            <person name="Kawaji H."/>
            <person name="Kawagashira N."/>
            <person name="Kawashima T."/>
            <person name="Kojima M."/>
            <person name="Kondo S."/>
            <person name="Konno H."/>
            <person name="Nakano K."/>
            <person name="Ninomiya N."/>
            <person name="Nishio T."/>
            <person name="Okada M."/>
            <person name="Plessy C."/>
            <person name="Shibata K."/>
            <person name="Shiraki T."/>
            <person name="Suzuki S."/>
            <person name="Tagami M."/>
            <person name="Waki K."/>
            <person name="Watahiki A."/>
            <person name="Okamura-Oho Y."/>
            <person name="Suzuki H."/>
            <person name="Kawai J."/>
            <person name="Hayashizaki Y."/>
        </authorList>
    </citation>
    <scope>NUCLEOTIDE SEQUENCE [LARGE SCALE MRNA]</scope>
    <source>
        <strain>C57BL/6J</strain>
        <tissue>Small intestine</tissue>
        <tissue>Tongue</tissue>
    </source>
</reference>
<reference key="2">
    <citation type="journal article" date="2009" name="PLoS Biol.">
        <title>Lineage-specific biology revealed by a finished genome assembly of the mouse.</title>
        <authorList>
            <person name="Church D.M."/>
            <person name="Goodstadt L."/>
            <person name="Hillier L.W."/>
            <person name="Zody M.C."/>
            <person name="Goldstein S."/>
            <person name="She X."/>
            <person name="Bult C.J."/>
            <person name="Agarwala R."/>
            <person name="Cherry J.L."/>
            <person name="DiCuccio M."/>
            <person name="Hlavina W."/>
            <person name="Kapustin Y."/>
            <person name="Meric P."/>
            <person name="Maglott D."/>
            <person name="Birtle Z."/>
            <person name="Marques A.C."/>
            <person name="Graves T."/>
            <person name="Zhou S."/>
            <person name="Teague B."/>
            <person name="Potamousis K."/>
            <person name="Churas C."/>
            <person name="Place M."/>
            <person name="Herschleb J."/>
            <person name="Runnheim R."/>
            <person name="Forrest D."/>
            <person name="Amos-Landgraf J."/>
            <person name="Schwartz D.C."/>
            <person name="Cheng Z."/>
            <person name="Lindblad-Toh K."/>
            <person name="Eichler E.E."/>
            <person name="Ponting C.P."/>
        </authorList>
    </citation>
    <scope>NUCLEOTIDE SEQUENCE [LARGE SCALE GENOMIC DNA]</scope>
    <source>
        <strain>C57BL/6J</strain>
    </source>
</reference>
<reference key="3">
    <citation type="submission" date="2005-07" db="EMBL/GenBank/DDBJ databases">
        <authorList>
            <person name="Mural R.J."/>
            <person name="Adams M.D."/>
            <person name="Myers E.W."/>
            <person name="Smith H.O."/>
            <person name="Venter J.C."/>
        </authorList>
    </citation>
    <scope>NUCLEOTIDE SEQUENCE [LARGE SCALE GENOMIC DNA]</scope>
</reference>
<reference key="4">
    <citation type="journal article" date="2004" name="Genome Res.">
        <title>The status, quality, and expansion of the NIH full-length cDNA project: the Mammalian Gene Collection (MGC).</title>
        <authorList>
            <consortium name="The MGC Project Team"/>
        </authorList>
    </citation>
    <scope>NUCLEOTIDE SEQUENCE [LARGE SCALE MRNA]</scope>
    <source>
        <strain>FVB/N</strain>
        <tissue>Colon</tissue>
        <tissue>Mammary gland</tissue>
        <tissue>Mammary tumor</tissue>
    </source>
</reference>
<reference key="5">
    <citation type="journal article" date="2008" name="Cell">
        <title>A mitochondrial protein compendium elucidates complex I disease biology.</title>
        <authorList>
            <person name="Pagliarini D.J."/>
            <person name="Calvo S.E."/>
            <person name="Chang B."/>
            <person name="Sheth S.A."/>
            <person name="Vafai S.B."/>
            <person name="Ong S.E."/>
            <person name="Walford G.A."/>
            <person name="Sugiana C."/>
            <person name="Boneh A."/>
            <person name="Chen W.K."/>
            <person name="Hill D.E."/>
            <person name="Vidal M."/>
            <person name="Evans J.G."/>
            <person name="Thorburn D.R."/>
            <person name="Carr S.A."/>
            <person name="Mootha V.K."/>
        </authorList>
    </citation>
    <scope>SUBCELLULAR LOCATION [LARGE SCALE ANALYSIS]</scope>
</reference>
<reference key="6">
    <citation type="journal article" date="2010" name="Cell">
        <title>A tissue-specific atlas of mouse protein phosphorylation and expression.</title>
        <authorList>
            <person name="Huttlin E.L."/>
            <person name="Jedrychowski M.P."/>
            <person name="Elias J.E."/>
            <person name="Goswami T."/>
            <person name="Rad R."/>
            <person name="Beausoleil S.A."/>
            <person name="Villen J."/>
            <person name="Haas W."/>
            <person name="Sowa M.E."/>
            <person name="Gygi S.P."/>
        </authorList>
    </citation>
    <scope>IDENTIFICATION BY MASS SPECTROMETRY [LARGE SCALE ANALYSIS]</scope>
    <source>
        <tissue>Brain</tissue>
        <tissue>Brown adipose tissue</tissue>
        <tissue>Heart</tissue>
        <tissue>Kidney</tissue>
        <tissue>Liver</tissue>
        <tissue>Pancreas</tissue>
        <tissue>Spleen</tissue>
        <tissue>Testis</tissue>
    </source>
</reference>
<sequence length="79" mass="9298">MAAPSMKERQACWGARDLYWRCLDDNAEDAARCQKLRSSFEASCPQQWIKYFDKRRDYLKFKEKFEAGGFQSSQSTENS</sequence>
<dbReference type="EMBL" id="AK008041">
    <property type="protein sequence ID" value="BAC25196.1"/>
    <property type="molecule type" value="mRNA"/>
</dbReference>
<dbReference type="EMBL" id="AK009404">
    <property type="protein sequence ID" value="BAC25257.1"/>
    <property type="molecule type" value="mRNA"/>
</dbReference>
<dbReference type="EMBL" id="AC151908">
    <property type="status" value="NOT_ANNOTATED_CDS"/>
    <property type="molecule type" value="Genomic_DNA"/>
</dbReference>
<dbReference type="EMBL" id="CH466525">
    <property type="protein sequence ID" value="EDL11811.1"/>
    <property type="molecule type" value="Genomic_DNA"/>
</dbReference>
<dbReference type="EMBL" id="BC024399">
    <property type="protein sequence ID" value="AAH24399.1"/>
    <property type="molecule type" value="mRNA"/>
</dbReference>
<dbReference type="EMBL" id="BC038634">
    <property type="protein sequence ID" value="AAH38634.1"/>
    <property type="molecule type" value="mRNA"/>
</dbReference>
<dbReference type="EMBL" id="BC046907">
    <property type="protein sequence ID" value="AAH46907.1"/>
    <property type="molecule type" value="mRNA"/>
</dbReference>
<dbReference type="CCDS" id="CCDS52709.1"/>
<dbReference type="RefSeq" id="NP_778152.1">
    <property type="nucleotide sequence ID" value="NM_174987.5"/>
</dbReference>
<dbReference type="SMR" id="Q8BGD8"/>
<dbReference type="FunCoup" id="Q8BGD8">
    <property type="interactions" value="874"/>
</dbReference>
<dbReference type="STRING" id="10090.ENSMUSP00000058279"/>
<dbReference type="iPTMnet" id="Q8BGD8"/>
<dbReference type="PhosphoSitePlus" id="Q8BGD8"/>
<dbReference type="jPOST" id="Q8BGD8"/>
<dbReference type="PaxDb" id="10090-ENSMUSP00000058279"/>
<dbReference type="PeptideAtlas" id="Q8BGD8"/>
<dbReference type="ProteomicsDB" id="277990"/>
<dbReference type="Pumba" id="Q8BGD8"/>
<dbReference type="Antibodypedia" id="34692">
    <property type="antibodies" value="91 antibodies from 19 providers"/>
</dbReference>
<dbReference type="Ensembl" id="ENSMUST00000059093.7">
    <property type="protein sequence ID" value="ENSMUSP00000058279.5"/>
    <property type="gene ID" value="ENSMUSG00000051671.8"/>
</dbReference>
<dbReference type="Ensembl" id="ENSMUST00000211868.2">
    <property type="protein sequence ID" value="ENSMUSP00000148765.2"/>
    <property type="gene ID" value="ENSMUSG00000051671.8"/>
</dbReference>
<dbReference type="GeneID" id="67892"/>
<dbReference type="KEGG" id="mmu:67892"/>
<dbReference type="UCSC" id="uc009nyu.2">
    <property type="organism name" value="mouse"/>
</dbReference>
<dbReference type="AGR" id="MGI:1915142"/>
<dbReference type="CTD" id="388753"/>
<dbReference type="MGI" id="MGI:1915142">
    <property type="gene designation" value="Coa6"/>
</dbReference>
<dbReference type="VEuPathDB" id="HostDB:ENSMUSG00000051671"/>
<dbReference type="eggNOG" id="KOG3057">
    <property type="taxonomic scope" value="Eukaryota"/>
</dbReference>
<dbReference type="GeneTree" id="ENSGT00390000004094"/>
<dbReference type="HOGENOM" id="CLU_142408_4_0_1"/>
<dbReference type="InParanoid" id="Q8BGD8"/>
<dbReference type="OMA" id="DAPRCEK"/>
<dbReference type="OrthoDB" id="16284at2759"/>
<dbReference type="PhylomeDB" id="Q8BGD8"/>
<dbReference type="TreeFam" id="TF335992"/>
<dbReference type="BioGRID-ORCS" id="67892">
    <property type="hits" value="20 hits in 76 CRISPR screens"/>
</dbReference>
<dbReference type="ChiTaRS" id="Coa6">
    <property type="organism name" value="mouse"/>
</dbReference>
<dbReference type="PRO" id="PR:Q8BGD8"/>
<dbReference type="Proteomes" id="UP000000589">
    <property type="component" value="Chromosome 8"/>
</dbReference>
<dbReference type="RNAct" id="Q8BGD8">
    <property type="molecule type" value="protein"/>
</dbReference>
<dbReference type="Bgee" id="ENSMUSG00000051671">
    <property type="expression patterns" value="Expressed in atrioventricular valve and 257 other cell types or tissues"/>
</dbReference>
<dbReference type="GO" id="GO:0005758">
    <property type="term" value="C:mitochondrial intermembrane space"/>
    <property type="evidence" value="ECO:0000250"/>
    <property type="project" value="UniProtKB"/>
</dbReference>
<dbReference type="GO" id="GO:0005739">
    <property type="term" value="C:mitochondrion"/>
    <property type="evidence" value="ECO:0007005"/>
    <property type="project" value="MGI"/>
</dbReference>
<dbReference type="GO" id="GO:0005507">
    <property type="term" value="F:copper ion binding"/>
    <property type="evidence" value="ECO:0000250"/>
    <property type="project" value="UniProtKB"/>
</dbReference>
<dbReference type="GO" id="GO:0033617">
    <property type="term" value="P:mitochondrial cytochrome c oxidase assembly"/>
    <property type="evidence" value="ECO:0000250"/>
    <property type="project" value="UniProtKB"/>
</dbReference>
<dbReference type="GO" id="GO:0008535">
    <property type="term" value="P:respiratory chain complex IV assembly"/>
    <property type="evidence" value="ECO:0000250"/>
    <property type="project" value="UniProtKB"/>
</dbReference>
<dbReference type="CDD" id="cd00926">
    <property type="entry name" value="Cyt_c_Oxidase_VIb"/>
    <property type="match status" value="1"/>
</dbReference>
<dbReference type="FunFam" id="1.10.10.140:FF:000002">
    <property type="entry name" value="Cytochrome c oxidase assembly factor 6 homolog"/>
    <property type="match status" value="1"/>
</dbReference>
<dbReference type="Gene3D" id="1.10.10.140">
    <property type="entry name" value="Cytochrome c oxidase, subunit VIb"/>
    <property type="match status" value="1"/>
</dbReference>
<dbReference type="InterPro" id="IPR042289">
    <property type="entry name" value="COA6"/>
</dbReference>
<dbReference type="InterPro" id="IPR048280">
    <property type="entry name" value="COX6B-like"/>
</dbReference>
<dbReference type="InterPro" id="IPR036549">
    <property type="entry name" value="CX6/COA6-like_sf"/>
</dbReference>
<dbReference type="PANTHER" id="PTHR46690">
    <property type="entry name" value="CYTOCHROME C OXIDASE ASSEMBLY FACTOR 6 HOMOLOG"/>
    <property type="match status" value="1"/>
</dbReference>
<dbReference type="PANTHER" id="PTHR46690:SF1">
    <property type="entry name" value="CYTOCHROME C OXIDASE ASSEMBLY FACTOR 6 HOMOLOG"/>
    <property type="match status" value="1"/>
</dbReference>
<dbReference type="Pfam" id="PF02297">
    <property type="entry name" value="COX6B"/>
    <property type="match status" value="1"/>
</dbReference>
<dbReference type="SUPFAM" id="SSF47694">
    <property type="entry name" value="Cytochrome c oxidase subunit h"/>
    <property type="match status" value="1"/>
</dbReference>
<dbReference type="PROSITE" id="PS51808">
    <property type="entry name" value="CHCH"/>
    <property type="match status" value="1"/>
</dbReference>
<feature type="chain" id="PRO_0000420734" description="Cytochrome c oxidase assembly factor 6 homolog">
    <location>
        <begin position="1"/>
        <end position="79"/>
    </location>
</feature>
<feature type="domain" description="CHCH" evidence="2">
    <location>
        <begin position="9"/>
        <end position="52"/>
    </location>
</feature>
<feature type="short sequence motif" description="Cx9C motif" evidence="2">
    <location>
        <begin position="12"/>
        <end position="22"/>
    </location>
</feature>
<feature type="short sequence motif" description="Cx10C motif" evidence="2">
    <location>
        <begin position="33"/>
        <end position="44"/>
    </location>
</feature>
<feature type="disulfide bond" evidence="2">
    <location>
        <begin position="12"/>
        <end position="44"/>
    </location>
</feature>
<feature type="disulfide bond" evidence="2">
    <location>
        <begin position="22"/>
        <end position="33"/>
    </location>
</feature>
<protein>
    <recommendedName>
        <fullName>Cytochrome c oxidase assembly factor 6 homolog</fullName>
    </recommendedName>
</protein>
<organism>
    <name type="scientific">Mus musculus</name>
    <name type="common">Mouse</name>
    <dbReference type="NCBI Taxonomy" id="10090"/>
    <lineage>
        <taxon>Eukaryota</taxon>
        <taxon>Metazoa</taxon>
        <taxon>Chordata</taxon>
        <taxon>Craniata</taxon>
        <taxon>Vertebrata</taxon>
        <taxon>Euteleostomi</taxon>
        <taxon>Mammalia</taxon>
        <taxon>Eutheria</taxon>
        <taxon>Euarchontoglires</taxon>
        <taxon>Glires</taxon>
        <taxon>Rodentia</taxon>
        <taxon>Myomorpha</taxon>
        <taxon>Muroidea</taxon>
        <taxon>Muridae</taxon>
        <taxon>Murinae</taxon>
        <taxon>Mus</taxon>
        <taxon>Mus</taxon>
    </lineage>
</organism>
<gene>
    <name type="primary">Coa6</name>
</gene>
<evidence type="ECO:0000250" key="1">
    <source>
        <dbReference type="UniProtKB" id="Q5JTJ3"/>
    </source>
</evidence>
<evidence type="ECO:0000255" key="2">
    <source>
        <dbReference type="PROSITE-ProRule" id="PRU01150"/>
    </source>
</evidence>
<evidence type="ECO:0000269" key="3">
    <source>
    </source>
</evidence>
<evidence type="ECO:0000305" key="4"/>
<proteinExistence type="evidence at protein level"/>
<comment type="function">
    <text evidence="1">Involved in the maturation of the mitochondrial respiratory chain complex IV subunit MT-CO2/COX2. Thereby, may regulate early steps of complex IV assembly. Mitochondrial respiratory chain complex IV or cytochrome c oxidase is the component of the respiratory chain that catalyzes the transfer of electrons from intermembrane space cytochrome c to molecular oxygen in the matrix and as a consequence contributes to the proton gradient involved in mitochondrial ATP synthesis. May also be required for efficient formation of respiratory supercomplexes comprised of complexes III and IV.</text>
</comment>
<comment type="subunit">
    <text evidence="1">Found in a complex with TMEM177, COX20, MT-CO2/COX2, COX18, SCO1 and SCO2. Interacts with COA1, MT-CO2/COX2, SCO1, SCO2 and COX20. Interacts with COX20 in a MT-CO2/COX2- and COX18-dependent manner. Interacts with COX16.</text>
</comment>
<comment type="subcellular location">
    <subcellularLocation>
        <location evidence="3">Mitochondrion</location>
    </subcellularLocation>
    <subcellularLocation>
        <location evidence="1">Mitochondrion intermembrane space</location>
    </subcellularLocation>
</comment>
<comment type="similarity">
    <text evidence="4">Belongs to the cytochrome c oxidase subunit 6B family.</text>
</comment>
<keyword id="KW-1015">Disulfide bond</keyword>
<keyword id="KW-0496">Mitochondrion</keyword>
<keyword id="KW-1185">Reference proteome</keyword>
<accession>Q8BGD8</accession>